<proteinExistence type="inferred from homology"/>
<dbReference type="EC" id="6.3.2.6" evidence="1"/>
<dbReference type="EMBL" id="CP000747">
    <property type="protein sequence ID" value="ACG77430.1"/>
    <property type="molecule type" value="Genomic_DNA"/>
</dbReference>
<dbReference type="RefSeq" id="WP_012521576.1">
    <property type="nucleotide sequence ID" value="NC_011144.1"/>
</dbReference>
<dbReference type="SMR" id="B4RHH0"/>
<dbReference type="STRING" id="450851.PHZ_c1016"/>
<dbReference type="KEGG" id="pzu:PHZ_c1016"/>
<dbReference type="eggNOG" id="COG0152">
    <property type="taxonomic scope" value="Bacteria"/>
</dbReference>
<dbReference type="HOGENOM" id="CLU_061495_2_0_5"/>
<dbReference type="OrthoDB" id="9801549at2"/>
<dbReference type="UniPathway" id="UPA00074">
    <property type="reaction ID" value="UER00131"/>
</dbReference>
<dbReference type="Proteomes" id="UP000001868">
    <property type="component" value="Chromosome"/>
</dbReference>
<dbReference type="GO" id="GO:0005829">
    <property type="term" value="C:cytosol"/>
    <property type="evidence" value="ECO:0007669"/>
    <property type="project" value="TreeGrafter"/>
</dbReference>
<dbReference type="GO" id="GO:0005524">
    <property type="term" value="F:ATP binding"/>
    <property type="evidence" value="ECO:0007669"/>
    <property type="project" value="UniProtKB-KW"/>
</dbReference>
<dbReference type="GO" id="GO:0004639">
    <property type="term" value="F:phosphoribosylaminoimidazolesuccinocarboxamide synthase activity"/>
    <property type="evidence" value="ECO:0007669"/>
    <property type="project" value="UniProtKB-UniRule"/>
</dbReference>
<dbReference type="GO" id="GO:0006189">
    <property type="term" value="P:'de novo' IMP biosynthetic process"/>
    <property type="evidence" value="ECO:0007669"/>
    <property type="project" value="UniProtKB-UniRule"/>
</dbReference>
<dbReference type="GO" id="GO:0009236">
    <property type="term" value="P:cobalamin biosynthetic process"/>
    <property type="evidence" value="ECO:0007669"/>
    <property type="project" value="InterPro"/>
</dbReference>
<dbReference type="CDD" id="cd01415">
    <property type="entry name" value="SAICAR_synt_PurC"/>
    <property type="match status" value="1"/>
</dbReference>
<dbReference type="FunFam" id="3.30.470.20:FF:000006">
    <property type="entry name" value="Phosphoribosylaminoimidazole-succinocarboxamide synthase"/>
    <property type="match status" value="1"/>
</dbReference>
<dbReference type="Gene3D" id="3.30.470.20">
    <property type="entry name" value="ATP-grasp fold, B domain"/>
    <property type="match status" value="1"/>
</dbReference>
<dbReference type="Gene3D" id="3.30.200.20">
    <property type="entry name" value="Phosphorylase Kinase, domain 1"/>
    <property type="match status" value="1"/>
</dbReference>
<dbReference type="HAMAP" id="MF_00137">
    <property type="entry name" value="SAICAR_synth"/>
    <property type="match status" value="1"/>
</dbReference>
<dbReference type="InterPro" id="IPR028923">
    <property type="entry name" value="SAICAR_synt/ADE2_N"/>
</dbReference>
<dbReference type="InterPro" id="IPR033934">
    <property type="entry name" value="SAICAR_synt_PurC"/>
</dbReference>
<dbReference type="InterPro" id="IPR001636">
    <property type="entry name" value="SAICAR_synth"/>
</dbReference>
<dbReference type="InterPro" id="IPR050089">
    <property type="entry name" value="SAICAR_synthetase"/>
</dbReference>
<dbReference type="InterPro" id="IPR018236">
    <property type="entry name" value="SAICAR_synthetase_CS"/>
</dbReference>
<dbReference type="NCBIfam" id="TIGR00081">
    <property type="entry name" value="purC"/>
    <property type="match status" value="1"/>
</dbReference>
<dbReference type="PANTHER" id="PTHR43599">
    <property type="entry name" value="MULTIFUNCTIONAL PROTEIN ADE2"/>
    <property type="match status" value="1"/>
</dbReference>
<dbReference type="PANTHER" id="PTHR43599:SF3">
    <property type="entry name" value="SI:DKEY-6E2.2"/>
    <property type="match status" value="1"/>
</dbReference>
<dbReference type="Pfam" id="PF01259">
    <property type="entry name" value="SAICAR_synt"/>
    <property type="match status" value="1"/>
</dbReference>
<dbReference type="SUPFAM" id="SSF56104">
    <property type="entry name" value="SAICAR synthase-like"/>
    <property type="match status" value="1"/>
</dbReference>
<dbReference type="PROSITE" id="PS01057">
    <property type="entry name" value="SAICAR_SYNTHETASE_1"/>
    <property type="match status" value="1"/>
</dbReference>
<dbReference type="PROSITE" id="PS01058">
    <property type="entry name" value="SAICAR_SYNTHETASE_2"/>
    <property type="match status" value="1"/>
</dbReference>
<gene>
    <name evidence="1" type="primary">purC</name>
    <name type="ordered locus">PHZ_c1016</name>
</gene>
<comment type="catalytic activity">
    <reaction evidence="1">
        <text>5-amino-1-(5-phospho-D-ribosyl)imidazole-4-carboxylate + L-aspartate + ATP = (2S)-2-[5-amino-1-(5-phospho-beta-D-ribosyl)imidazole-4-carboxamido]succinate + ADP + phosphate + 2 H(+)</text>
        <dbReference type="Rhea" id="RHEA:22628"/>
        <dbReference type="ChEBI" id="CHEBI:15378"/>
        <dbReference type="ChEBI" id="CHEBI:29991"/>
        <dbReference type="ChEBI" id="CHEBI:30616"/>
        <dbReference type="ChEBI" id="CHEBI:43474"/>
        <dbReference type="ChEBI" id="CHEBI:58443"/>
        <dbReference type="ChEBI" id="CHEBI:77657"/>
        <dbReference type="ChEBI" id="CHEBI:456216"/>
        <dbReference type="EC" id="6.3.2.6"/>
    </reaction>
</comment>
<comment type="pathway">
    <text evidence="1">Purine metabolism; IMP biosynthesis via de novo pathway; 5-amino-1-(5-phospho-D-ribosyl)imidazole-4-carboxamide from 5-amino-1-(5-phospho-D-ribosyl)imidazole-4-carboxylate: step 1/2.</text>
</comment>
<comment type="similarity">
    <text evidence="1">Belongs to the SAICAR synthetase family.</text>
</comment>
<name>PUR7_PHEZH</name>
<protein>
    <recommendedName>
        <fullName evidence="1">Phosphoribosylaminoimidazole-succinocarboxamide synthase</fullName>
        <ecNumber evidence="1">6.3.2.6</ecNumber>
    </recommendedName>
    <alternativeName>
        <fullName evidence="1">SAICAR synthetase</fullName>
    </alternativeName>
</protein>
<reference key="1">
    <citation type="journal article" date="2008" name="BMC Genomics">
        <title>Complete genome of Phenylobacterium zucineum - a novel facultative intracellular bacterium isolated from human erythroleukemia cell line K562.</title>
        <authorList>
            <person name="Luo Y."/>
            <person name="Xu X."/>
            <person name="Ding Z."/>
            <person name="Liu Z."/>
            <person name="Zhang B."/>
            <person name="Yan Z."/>
            <person name="Sun J."/>
            <person name="Hu S."/>
            <person name="Hu X."/>
        </authorList>
    </citation>
    <scope>NUCLEOTIDE SEQUENCE [LARGE SCALE GENOMIC DNA]</scope>
    <source>
        <strain>HLK1</strain>
    </source>
</reference>
<keyword id="KW-0067">ATP-binding</keyword>
<keyword id="KW-0436">Ligase</keyword>
<keyword id="KW-0547">Nucleotide-binding</keyword>
<keyword id="KW-0658">Purine biosynthesis</keyword>
<keyword id="KW-1185">Reference proteome</keyword>
<accession>B4RHH0</accession>
<organism>
    <name type="scientific">Phenylobacterium zucineum (strain HLK1)</name>
    <dbReference type="NCBI Taxonomy" id="450851"/>
    <lineage>
        <taxon>Bacteria</taxon>
        <taxon>Pseudomonadati</taxon>
        <taxon>Pseudomonadota</taxon>
        <taxon>Alphaproteobacteria</taxon>
        <taxon>Caulobacterales</taxon>
        <taxon>Caulobacteraceae</taxon>
        <taxon>Phenylobacterium</taxon>
    </lineage>
</organism>
<feature type="chain" id="PRO_1000096001" description="Phosphoribosylaminoimidazole-succinocarboxamide synthase">
    <location>
        <begin position="1"/>
        <end position="251"/>
    </location>
</feature>
<evidence type="ECO:0000255" key="1">
    <source>
        <dbReference type="HAMAP-Rule" id="MF_00137"/>
    </source>
</evidence>
<sequence length="251" mass="28756">MTRRKKIYEGKAKILYEGPEPGTLIQYFKDDTTAFDATKKAVLEGKGVINNRISEYIMTKLNSIGVQNHFIKRLNLREQLIREVEIIPLEVVCRNVAAGSLSKRFGLPEGQALPRSIIEFYLKDDKLHDPMVAEEHITAFNWASTQEIDDMMALTLRVNDFLTGLFSGVGITLVDFKIEFGRIWENDFSRIILADEISPDSCRLWDSQTNEKLDKDRFRRDLGNVIESYTEVARRLGIMKEMPTVIQGGLH</sequence>